<dbReference type="EC" id="3.5.4.39" evidence="1"/>
<dbReference type="EMBL" id="AJ248284">
    <property type="protein sequence ID" value="CAB49270.1"/>
    <property type="status" value="ALT_INIT"/>
    <property type="molecule type" value="Genomic_DNA"/>
</dbReference>
<dbReference type="EMBL" id="HE613800">
    <property type="protein sequence ID" value="CCE69725.1"/>
    <property type="molecule type" value="Genomic_DNA"/>
</dbReference>
<dbReference type="PIR" id="G75148">
    <property type="entry name" value="G75148"/>
</dbReference>
<dbReference type="RefSeq" id="WP_048146537.1">
    <property type="nucleotide sequence ID" value="NC_000868.1"/>
</dbReference>
<dbReference type="SMR" id="Q9V1S9"/>
<dbReference type="STRING" id="272844.PAB0223"/>
<dbReference type="KEGG" id="pab:PAB0223"/>
<dbReference type="PATRIC" id="fig|272844.11.peg.369"/>
<dbReference type="eggNOG" id="arCOG04301">
    <property type="taxonomic scope" value="Archaea"/>
</dbReference>
<dbReference type="HOGENOM" id="CLU_062816_1_0_2"/>
<dbReference type="OrthoDB" id="53087at2157"/>
<dbReference type="UniPathway" id="UPA00065"/>
<dbReference type="Proteomes" id="UP000000810">
    <property type="component" value="Chromosome"/>
</dbReference>
<dbReference type="Proteomes" id="UP000009139">
    <property type="component" value="Chromosome"/>
</dbReference>
<dbReference type="GO" id="GO:0003934">
    <property type="term" value="F:GTP cyclohydrolase I activity"/>
    <property type="evidence" value="ECO:0007669"/>
    <property type="project" value="InterPro"/>
</dbReference>
<dbReference type="GO" id="GO:0044682">
    <property type="term" value="F:GTP cyclohydrolase IV activity"/>
    <property type="evidence" value="ECO:0007669"/>
    <property type="project" value="UniProtKB-UniRule"/>
</dbReference>
<dbReference type="GO" id="GO:0005506">
    <property type="term" value="F:iron ion binding"/>
    <property type="evidence" value="ECO:0007669"/>
    <property type="project" value="UniProtKB-UniRule"/>
</dbReference>
<dbReference type="GO" id="GO:2001118">
    <property type="term" value="P:tetrahydromethanopterin biosynthetic process"/>
    <property type="evidence" value="ECO:0007669"/>
    <property type="project" value="UniProtKB-UniRule"/>
</dbReference>
<dbReference type="Gene3D" id="3.10.270.10">
    <property type="entry name" value="Urate Oxidase"/>
    <property type="match status" value="1"/>
</dbReference>
<dbReference type="HAMAP" id="MF_01527_A">
    <property type="entry name" value="GTP_cyclohydrol_A"/>
    <property type="match status" value="1"/>
</dbReference>
<dbReference type="InterPro" id="IPR003801">
    <property type="entry name" value="GTP_cyclohydrolase_FolE2/MptA"/>
</dbReference>
<dbReference type="InterPro" id="IPR022840">
    <property type="entry name" value="GTP_cyclohydrolase_MptA"/>
</dbReference>
<dbReference type="NCBIfam" id="NF010204">
    <property type="entry name" value="PRK13675.1-1"/>
    <property type="match status" value="1"/>
</dbReference>
<dbReference type="PANTHER" id="PTHR36445">
    <property type="entry name" value="GTP CYCLOHYDROLASE MPTA"/>
    <property type="match status" value="1"/>
</dbReference>
<dbReference type="PANTHER" id="PTHR36445:SF1">
    <property type="entry name" value="GTP CYCLOHYDROLASE MPTA"/>
    <property type="match status" value="1"/>
</dbReference>
<dbReference type="Pfam" id="PF02649">
    <property type="entry name" value="GCHY-1"/>
    <property type="match status" value="1"/>
</dbReference>
<keyword id="KW-0378">Hydrolase</keyword>
<keyword id="KW-0408">Iron</keyword>
<keyword id="KW-0479">Metal-binding</keyword>
<comment type="function">
    <text evidence="1">Converts GTP to 7,8-dihydro-D-neopterin 2',3'-cyclic phosphate, the first intermediate in the biosynthesis of coenzyme methanopterin.</text>
</comment>
<comment type="catalytic activity">
    <reaction evidence="1">
        <text>GTP + H2O = 7,8-dihydroneopterin 2',3'-cyclic phosphate + formate + diphosphate + H(+)</text>
        <dbReference type="Rhea" id="RHEA:25860"/>
        <dbReference type="ChEBI" id="CHEBI:15377"/>
        <dbReference type="ChEBI" id="CHEBI:15378"/>
        <dbReference type="ChEBI" id="CHEBI:15740"/>
        <dbReference type="ChEBI" id="CHEBI:33019"/>
        <dbReference type="ChEBI" id="CHEBI:37565"/>
        <dbReference type="ChEBI" id="CHEBI:58854"/>
        <dbReference type="EC" id="3.5.4.39"/>
    </reaction>
</comment>
<comment type="cofactor">
    <cofactor evidence="1">
        <name>Fe(2+)</name>
        <dbReference type="ChEBI" id="CHEBI:29033"/>
    </cofactor>
    <text evidence="1">Binds 1 Fe(2+) ion per subunit.</text>
</comment>
<comment type="pathway">
    <text evidence="1">Cofactor biosynthesis; 5,6,7,8-tetrahydromethanopterin biosynthesis.</text>
</comment>
<comment type="subunit">
    <text evidence="1">Homodimer.</text>
</comment>
<comment type="similarity">
    <text evidence="1">Belongs to the GTP cyclohydrolase IV family.</text>
</comment>
<comment type="sequence caution" evidence="2">
    <conflict type="erroneous initiation">
        <sequence resource="EMBL-CDS" id="CAB49270"/>
    </conflict>
    <text>Extended N-terminus.</text>
</comment>
<protein>
    <recommendedName>
        <fullName evidence="1">GTP cyclohydrolase MptA</fullName>
        <ecNumber evidence="1">3.5.4.39</ecNumber>
    </recommendedName>
    <alternativeName>
        <fullName evidence="1">GTP cyclohydrolase IV</fullName>
    </alternativeName>
</protein>
<name>MPTA_PYRAB</name>
<reference key="1">
    <citation type="journal article" date="2003" name="Mol. Microbiol.">
        <title>An integrated analysis of the genome of the hyperthermophilic archaeon Pyrococcus abyssi.</title>
        <authorList>
            <person name="Cohen G.N."/>
            <person name="Barbe V."/>
            <person name="Flament D."/>
            <person name="Galperin M."/>
            <person name="Heilig R."/>
            <person name="Lecompte O."/>
            <person name="Poch O."/>
            <person name="Prieur D."/>
            <person name="Querellou J."/>
            <person name="Ripp R."/>
            <person name="Thierry J.-C."/>
            <person name="Van der Oost J."/>
            <person name="Weissenbach J."/>
            <person name="Zivanovic Y."/>
            <person name="Forterre P."/>
        </authorList>
    </citation>
    <scope>NUCLEOTIDE SEQUENCE [LARGE SCALE GENOMIC DNA]</scope>
    <source>
        <strain>GE5 / Orsay</strain>
    </source>
</reference>
<reference key="2">
    <citation type="journal article" date="2012" name="Curr. Microbiol.">
        <title>Re-annotation of two hyperthermophilic archaea Pyrococcus abyssi GE5 and Pyrococcus furiosus DSM 3638.</title>
        <authorList>
            <person name="Gao J."/>
            <person name="Wang J."/>
        </authorList>
    </citation>
    <scope>GENOME REANNOTATION</scope>
    <source>
        <strain>GE5 / Orsay</strain>
    </source>
</reference>
<organism>
    <name type="scientific">Pyrococcus abyssi (strain GE5 / Orsay)</name>
    <dbReference type="NCBI Taxonomy" id="272844"/>
    <lineage>
        <taxon>Archaea</taxon>
        <taxon>Methanobacteriati</taxon>
        <taxon>Methanobacteriota</taxon>
        <taxon>Thermococci</taxon>
        <taxon>Thermococcales</taxon>
        <taxon>Thermococcaceae</taxon>
        <taxon>Pyrococcus</taxon>
    </lineage>
</organism>
<accession>Q9V1S9</accession>
<accession>G8ZHY2</accession>
<gene>
    <name evidence="1" type="primary">mptA</name>
    <name type="ordered locus">PYRAB03480</name>
    <name type="ORF">PAB0223</name>
</gene>
<feature type="chain" id="PRO_0000147749" description="GTP cyclohydrolase MptA">
    <location>
        <begin position="1"/>
        <end position="266"/>
    </location>
</feature>
<feature type="site" description="May be catalytically important" evidence="1">
    <location>
        <position position="156"/>
    </location>
</feature>
<evidence type="ECO:0000255" key="1">
    <source>
        <dbReference type="HAMAP-Rule" id="MF_01527"/>
    </source>
</evidence>
<evidence type="ECO:0000305" key="2"/>
<sequence>MYVETQEEEPEIKIPLPRVGITNLRTIAKINWKGRIYTFIPTFEVTIDLPREKKGIHMSRLVESITDAMSEAVEEEVKKIHTSLEELALAVIKRLEEKHKHKRAEVWIRTTLILEKTTPASRKLSYEPYDVEVAVIKEGKDVKKRLKVRVIGNTACPHAMANNNGKTHIQRAIGELEVMADFNEEIALEDMIEVVESSFSSPTYTLLKTPDENAVVRKMYENPKFVEDVAREILMKAREKFPGRIHVRVISNESIHKHDVIAEAWA</sequence>
<proteinExistence type="inferred from homology"/>